<organism>
    <name type="scientific">Mus musculus</name>
    <name type="common">Mouse</name>
    <dbReference type="NCBI Taxonomy" id="10090"/>
    <lineage>
        <taxon>Eukaryota</taxon>
        <taxon>Metazoa</taxon>
        <taxon>Chordata</taxon>
        <taxon>Craniata</taxon>
        <taxon>Vertebrata</taxon>
        <taxon>Euteleostomi</taxon>
        <taxon>Mammalia</taxon>
        <taxon>Eutheria</taxon>
        <taxon>Euarchontoglires</taxon>
        <taxon>Glires</taxon>
        <taxon>Rodentia</taxon>
        <taxon>Myomorpha</taxon>
        <taxon>Muroidea</taxon>
        <taxon>Muridae</taxon>
        <taxon>Murinae</taxon>
        <taxon>Mus</taxon>
        <taxon>Mus</taxon>
    </lineage>
</organism>
<sequence>MNPAISVALLLSVLQVSRGQKVTSLTACLVNQNLRLDCRHENNTKDNSIQHEFSLTREKRKHVLSGTLGIPEHTYRSRVTLSNQPYIKVLTLANFTTKDEGDYFCELQVSGANPMSSNKSISVYRDKLVKCGGISLLVQNTSWMLLLLLSLSLLQALDFISL</sequence>
<name>THY1_MOUSE</name>
<gene>
    <name type="primary">Thy1</name>
    <name type="synonym">Thy-1</name>
</gene>
<feature type="signal peptide" evidence="2">
    <location>
        <begin position="1"/>
        <end position="19"/>
    </location>
</feature>
<feature type="chain" id="PRO_0000014977" description="Thy-1 membrane glycoprotein">
    <location>
        <begin position="20"/>
        <end position="131"/>
    </location>
</feature>
<feature type="propeptide" id="PRO_0000014978" description="Removed in mature form">
    <location>
        <begin position="132"/>
        <end position="162"/>
    </location>
</feature>
<feature type="domain" description="Ig-like V-type">
    <location>
        <begin position="20"/>
        <end position="127"/>
    </location>
</feature>
<feature type="modified residue" description="Pyrrolidone carboxylic acid" evidence="2">
    <location>
        <position position="20"/>
    </location>
</feature>
<feature type="lipid moiety-binding region" description="GPI-anchor amidated cysteine; alternate" evidence="2">
    <location>
        <position position="131"/>
    </location>
</feature>
<feature type="glycosylation site" description="N-linked (GlcNAc...) asparagine" evidence="2">
    <location>
        <position position="42"/>
    </location>
</feature>
<feature type="glycosylation site" description="N-linked (GlcNAc...) asparagine" evidence="2">
    <location>
        <position position="94"/>
    </location>
</feature>
<feature type="glycosylation site" description="N-linked (GlcNAc...) asparagine" evidence="2">
    <location>
        <position position="118"/>
    </location>
</feature>
<feature type="disulfide bond" description="Alternate" evidence="1 2">
    <location>
        <begin position="28"/>
        <end position="131"/>
    </location>
</feature>
<feature type="disulfide bond" evidence="1 2">
    <location>
        <begin position="38"/>
        <end position="105"/>
    </location>
</feature>
<feature type="sequence variant" description="In allele Thy-1.1.">
    <original>Q</original>
    <variation>R</variation>
    <location>
        <position position="108"/>
    </location>
</feature>
<reference key="1">
    <citation type="journal article" date="1985" name="Science">
        <title>A hydrophobic transmembrane segment at the carboxyl terminus of thy-1.</title>
        <authorList>
            <person name="Seki T."/>
            <person name="Chang H.-C."/>
            <person name="Moriuchi T."/>
            <person name="Denome R."/>
            <person name="Ploegh H."/>
            <person name="Silver J."/>
        </authorList>
    </citation>
    <scope>NUCLEOTIDE SEQUENCE [GENOMIC DNA]</scope>
    <scope>POLYMORPHISM</scope>
</reference>
<reference key="2">
    <citation type="journal article" date="1985" name="EMBO J.">
        <title>Structure of the murine Thy-1 gene.</title>
        <authorList>
            <person name="Giguere V."/>
            <person name="Isobe K."/>
            <person name="Grosveld F."/>
        </authorList>
    </citation>
    <scope>NUCLEOTIDE SEQUENCE [GENOMIC DNA] (THY-1.2 ALLOTYPE)</scope>
    <scope>POLYMORPHISM</scope>
    <source>
        <strain>BALB/cJ</strain>
    </source>
</reference>
<reference key="3">
    <citation type="journal article" date="1985" name="Proc. Natl. Acad. Sci. U.S.A.">
        <title>Isolation and characterization of mouse Thy-1 genomic clones.</title>
        <authorList>
            <person name="Chang H.-C."/>
            <person name="Seki T."/>
            <person name="Moriuchi T."/>
            <person name="Silver J."/>
        </authorList>
    </citation>
    <scope>NUCLEOTIDE SEQUENCE [GENOMIC DNA] (THY-1.2 ALLOTYPE)</scope>
    <scope>POLYMORPHISM</scope>
</reference>
<reference key="4">
    <citation type="journal article" date="1986" name="J. Immunol.">
        <title>The mouse Thy-1.2 glycoprotein gene: complete sequence and identification of an unusual promoter.</title>
        <authorList>
            <person name="Ingraham H.A."/>
            <person name="Lawless G.M."/>
            <person name="Evans G.A."/>
        </authorList>
    </citation>
    <scope>NUCLEOTIDE SEQUENCE [GENOMIC DNA] (THY-1.2 ALLOTYPE)</scope>
    <scope>POLYMORPHISM</scope>
</reference>
<reference key="5">
    <citation type="journal article" date="2004" name="Genome Res.">
        <title>The status, quality, and expansion of the NIH full-length cDNA project: the Mammalian Gene Collection (MGC).</title>
        <authorList>
            <consortium name="The MGC Project Team"/>
        </authorList>
    </citation>
    <scope>NUCLEOTIDE SEQUENCE [LARGE SCALE MRNA]</scope>
    <source>
        <tissue>Olfactory epithelium</tissue>
    </source>
</reference>
<reference key="6">
    <citation type="journal article" date="1982" name="Science">
        <title>Neuronal cell Thy-1 glycoprotein: homology with immunoglobulin.</title>
        <authorList>
            <person name="Williams A.F."/>
            <person name="Gagnon J."/>
        </authorList>
    </citation>
    <scope>PROTEIN SEQUENCE OF 20-131</scope>
    <scope>PYROGLUTAMATE FORMATION AT GLN-20</scope>
    <scope>GPI-ANCHOR AT CYS-131</scope>
</reference>
<reference key="7">
    <citation type="journal article" date="2010" name="Cell">
        <title>A tissue-specific atlas of mouse protein phosphorylation and expression.</title>
        <authorList>
            <person name="Huttlin E.L."/>
            <person name="Jedrychowski M.P."/>
            <person name="Elias J.E."/>
            <person name="Goswami T."/>
            <person name="Rad R."/>
            <person name="Beausoleil S.A."/>
            <person name="Villen J."/>
            <person name="Haas W."/>
            <person name="Sowa M.E."/>
            <person name="Gygi S.P."/>
        </authorList>
    </citation>
    <scope>IDENTIFICATION BY MASS SPECTROMETRY [LARGE SCALE ANALYSIS]</scope>
    <source>
        <tissue>Brain</tissue>
        <tissue>Brown adipose tissue</tissue>
        <tissue>Heart</tissue>
        <tissue>Lung</tissue>
        <tissue>Pancreas</tissue>
        <tissue>Spleen</tissue>
    </source>
</reference>
<comment type="function">
    <text>May play a role in cell-cell or cell-ligand interactions during synaptogenesis and other events in the brain.</text>
</comment>
<comment type="subcellular location">
    <subcellularLocation>
        <location>Cell membrane</location>
        <topology>Lipid-anchor</topology>
        <topology>GPI-anchor</topology>
    </subcellularLocation>
</comment>
<comment type="polymorphism">
    <text evidence="3 4 5 6">There are two major alleles; Thy-1.1 (CD90.1) and Thy-1.2 (CD90.2).</text>
</comment>
<dbReference type="EMBL" id="X03151">
    <property type="protein sequence ID" value="CAA26930.1"/>
    <property type="molecule type" value="Genomic_DNA"/>
</dbReference>
<dbReference type="EMBL" id="X02771">
    <property type="protein sequence ID" value="CAA26548.1"/>
    <property type="molecule type" value="Genomic_DNA"/>
</dbReference>
<dbReference type="EMBL" id="X02772">
    <property type="protein sequence ID" value="CAA26549.1"/>
    <property type="status" value="ALT_SEQ"/>
    <property type="molecule type" value="Genomic_DNA"/>
</dbReference>
<dbReference type="EMBL" id="X02773">
    <property type="protein sequence ID" value="CAA26550.1"/>
    <property type="status" value="ALT_SEQ"/>
    <property type="molecule type" value="Genomic_DNA"/>
</dbReference>
<dbReference type="EMBL" id="M10246">
    <property type="protein sequence ID" value="AAA40440.1"/>
    <property type="molecule type" value="Genomic_DNA"/>
</dbReference>
<dbReference type="EMBL" id="M11160">
    <property type="protein sequence ID" value="AAA40441.1"/>
    <property type="molecule type" value="Genomic_DNA"/>
</dbReference>
<dbReference type="EMBL" id="M12379">
    <property type="protein sequence ID" value="AAA40443.1"/>
    <property type="molecule type" value="Genomic_DNA"/>
</dbReference>
<dbReference type="EMBL" id="BC054436">
    <property type="protein sequence ID" value="AAH54436.1"/>
    <property type="molecule type" value="mRNA"/>
</dbReference>
<dbReference type="CCDS" id="CCDS23093.1"/>
<dbReference type="PIR" id="A94278">
    <property type="entry name" value="TDMS"/>
</dbReference>
<dbReference type="RefSeq" id="NP_033408.1">
    <property type="nucleotide sequence ID" value="NM_009382.3"/>
</dbReference>
<dbReference type="SMR" id="P01831"/>
<dbReference type="BioGRID" id="204188">
    <property type="interactions" value="12"/>
</dbReference>
<dbReference type="FunCoup" id="P01831">
    <property type="interactions" value="336"/>
</dbReference>
<dbReference type="IntAct" id="P01831">
    <property type="interactions" value="6"/>
</dbReference>
<dbReference type="MINT" id="P01831"/>
<dbReference type="STRING" id="10090.ENSMUSP00000110489"/>
<dbReference type="GlyConnect" id="2769">
    <property type="glycosylation" value="44 N-Linked glycans (3 sites)"/>
</dbReference>
<dbReference type="GlyCosmos" id="P01831">
    <property type="glycosylation" value="3 sites, 42 glycans"/>
</dbReference>
<dbReference type="GlyGen" id="P01831">
    <property type="glycosylation" value="4 sites, 41 N-linked glycans (3 sites), 1 O-linked glycan (1 site)"/>
</dbReference>
<dbReference type="iPTMnet" id="P01831"/>
<dbReference type="PhosphoSitePlus" id="P01831"/>
<dbReference type="SwissPalm" id="P01831"/>
<dbReference type="jPOST" id="P01831"/>
<dbReference type="PaxDb" id="10090-ENSMUSP00000110489"/>
<dbReference type="PeptideAtlas" id="P01831"/>
<dbReference type="ProteomicsDB" id="262986"/>
<dbReference type="Pumba" id="P01831"/>
<dbReference type="Antibodypedia" id="671">
    <property type="antibodies" value="2207 antibodies from 49 providers"/>
</dbReference>
<dbReference type="DNASU" id="21838"/>
<dbReference type="Ensembl" id="ENSMUST00000114840.2">
    <property type="protein sequence ID" value="ENSMUSP00000110489.2"/>
    <property type="gene ID" value="ENSMUSG00000032011.6"/>
</dbReference>
<dbReference type="GeneID" id="21838"/>
<dbReference type="KEGG" id="mmu:21838"/>
<dbReference type="UCSC" id="uc009pbl.1">
    <property type="organism name" value="mouse"/>
</dbReference>
<dbReference type="AGR" id="MGI:98747"/>
<dbReference type="CTD" id="7070"/>
<dbReference type="MGI" id="MGI:98747">
    <property type="gene designation" value="Thy1"/>
</dbReference>
<dbReference type="VEuPathDB" id="HostDB:ENSMUSG00000032011"/>
<dbReference type="eggNOG" id="ENOG502S18P">
    <property type="taxonomic scope" value="Eukaryota"/>
</dbReference>
<dbReference type="GeneTree" id="ENSGT00390000012352"/>
<dbReference type="HOGENOM" id="CLU_136861_0_0_1"/>
<dbReference type="InParanoid" id="P01831"/>
<dbReference type="OMA" id="MNPAIGI"/>
<dbReference type="OrthoDB" id="8396829at2759"/>
<dbReference type="PhylomeDB" id="P01831"/>
<dbReference type="TreeFam" id="TF336059"/>
<dbReference type="Reactome" id="R-MMU-163125">
    <property type="pathway name" value="Post-translational modification: synthesis of GPI-anchored proteins"/>
</dbReference>
<dbReference type="BioGRID-ORCS" id="21838">
    <property type="hits" value="5 hits in 78 CRISPR screens"/>
</dbReference>
<dbReference type="CD-CODE" id="CE726F99">
    <property type="entry name" value="Postsynaptic density"/>
</dbReference>
<dbReference type="ChiTaRS" id="Thy1">
    <property type="organism name" value="mouse"/>
</dbReference>
<dbReference type="PRO" id="PR:P01831"/>
<dbReference type="Proteomes" id="UP000000589">
    <property type="component" value="Chromosome 9"/>
</dbReference>
<dbReference type="RNAct" id="P01831">
    <property type="molecule type" value="protein"/>
</dbReference>
<dbReference type="Bgee" id="ENSMUSG00000032011">
    <property type="expression patterns" value="Expressed in thymus and 226 other cell types or tissues"/>
</dbReference>
<dbReference type="ExpressionAtlas" id="P01831">
    <property type="expression patterns" value="baseline and differential"/>
</dbReference>
<dbReference type="GO" id="GO:0016324">
    <property type="term" value="C:apical plasma membrane"/>
    <property type="evidence" value="ECO:0007669"/>
    <property type="project" value="Ensembl"/>
</dbReference>
<dbReference type="GO" id="GO:0030673">
    <property type="term" value="C:axolemma"/>
    <property type="evidence" value="ECO:0000250"/>
    <property type="project" value="UniProtKB"/>
</dbReference>
<dbReference type="GO" id="GO:0009986">
    <property type="term" value="C:cell surface"/>
    <property type="evidence" value="ECO:0000250"/>
    <property type="project" value="UniProtKB"/>
</dbReference>
<dbReference type="GO" id="GO:0030425">
    <property type="term" value="C:dendrite"/>
    <property type="evidence" value="ECO:0000314"/>
    <property type="project" value="MGI"/>
</dbReference>
<dbReference type="GO" id="GO:0032590">
    <property type="term" value="C:dendrite membrane"/>
    <property type="evidence" value="ECO:0000250"/>
    <property type="project" value="UniProtKB"/>
</dbReference>
<dbReference type="GO" id="GO:0005783">
    <property type="term" value="C:endoplasmic reticulum"/>
    <property type="evidence" value="ECO:0007669"/>
    <property type="project" value="Ensembl"/>
</dbReference>
<dbReference type="GO" id="GO:0009897">
    <property type="term" value="C:external side of plasma membrane"/>
    <property type="evidence" value="ECO:0000314"/>
    <property type="project" value="UniProtKB"/>
</dbReference>
<dbReference type="GO" id="GO:0098978">
    <property type="term" value="C:glutamatergic synapse"/>
    <property type="evidence" value="ECO:0000314"/>
    <property type="project" value="SynGO"/>
</dbReference>
<dbReference type="GO" id="GO:0030426">
    <property type="term" value="C:growth cone"/>
    <property type="evidence" value="ECO:0000250"/>
    <property type="project" value="UniProtKB"/>
</dbReference>
<dbReference type="GO" id="GO:0045121">
    <property type="term" value="C:membrane raft"/>
    <property type="evidence" value="ECO:0000314"/>
    <property type="project" value="MGI"/>
</dbReference>
<dbReference type="GO" id="GO:0043209">
    <property type="term" value="C:myelin sheath"/>
    <property type="evidence" value="ECO:0007005"/>
    <property type="project" value="UniProtKB"/>
</dbReference>
<dbReference type="GO" id="GO:0032809">
    <property type="term" value="C:neuronal cell body membrane"/>
    <property type="evidence" value="ECO:0000250"/>
    <property type="project" value="UniProtKB"/>
</dbReference>
<dbReference type="GO" id="GO:0005886">
    <property type="term" value="C:plasma membrane"/>
    <property type="evidence" value="ECO:0000250"/>
    <property type="project" value="UniProtKB"/>
</dbReference>
<dbReference type="GO" id="GO:0098794">
    <property type="term" value="C:postsynapse"/>
    <property type="evidence" value="ECO:0000314"/>
    <property type="project" value="SynGO"/>
</dbReference>
<dbReference type="GO" id="GO:0098793">
    <property type="term" value="C:presynapse"/>
    <property type="evidence" value="ECO:0000314"/>
    <property type="project" value="SynGO"/>
</dbReference>
<dbReference type="GO" id="GO:0034235">
    <property type="term" value="F:GPI anchor binding"/>
    <property type="evidence" value="ECO:0000250"/>
    <property type="project" value="UniProtKB"/>
</dbReference>
<dbReference type="GO" id="GO:0005096">
    <property type="term" value="F:GTPase activator activity"/>
    <property type="evidence" value="ECO:0000250"/>
    <property type="project" value="UniProtKB"/>
</dbReference>
<dbReference type="GO" id="GO:0005178">
    <property type="term" value="F:integrin binding"/>
    <property type="evidence" value="ECO:0000315"/>
    <property type="project" value="UniProtKB"/>
</dbReference>
<dbReference type="GO" id="GO:0001525">
    <property type="term" value="P:angiogenesis"/>
    <property type="evidence" value="ECO:0000314"/>
    <property type="project" value="UniProtKB"/>
</dbReference>
<dbReference type="GO" id="GO:0098609">
    <property type="term" value="P:cell-cell adhesion"/>
    <property type="evidence" value="ECO:0000250"/>
    <property type="project" value="UniProtKB"/>
</dbReference>
<dbReference type="GO" id="GO:0007267">
    <property type="term" value="P:cell-cell signaling"/>
    <property type="evidence" value="ECO:0000314"/>
    <property type="project" value="UniProtKB"/>
</dbReference>
<dbReference type="GO" id="GO:0007010">
    <property type="term" value="P:cytoskeleton organization"/>
    <property type="evidence" value="ECO:0000250"/>
    <property type="project" value="UniProtKB"/>
</dbReference>
<dbReference type="GO" id="GO:0048041">
    <property type="term" value="P:focal adhesion assembly"/>
    <property type="evidence" value="ECO:0000250"/>
    <property type="project" value="UniProtKB"/>
</dbReference>
<dbReference type="GO" id="GO:0034113">
    <property type="term" value="P:heterotypic cell-cell adhesion"/>
    <property type="evidence" value="ECO:0007669"/>
    <property type="project" value="Ensembl"/>
</dbReference>
<dbReference type="GO" id="GO:0007229">
    <property type="term" value="P:integrin-mediated signaling pathway"/>
    <property type="evidence" value="ECO:0000315"/>
    <property type="project" value="UniProtKB"/>
</dbReference>
<dbReference type="GO" id="GO:0050771">
    <property type="term" value="P:negative regulation of axonogenesis"/>
    <property type="evidence" value="ECO:0000250"/>
    <property type="project" value="UniProtKB"/>
</dbReference>
<dbReference type="GO" id="GO:0030336">
    <property type="term" value="P:negative regulation of cell migration"/>
    <property type="evidence" value="ECO:0000250"/>
    <property type="project" value="UniProtKB"/>
</dbReference>
<dbReference type="GO" id="GO:0070571">
    <property type="term" value="P:negative regulation of neuron projection regeneration"/>
    <property type="evidence" value="ECO:0000315"/>
    <property type="project" value="UniProtKB"/>
</dbReference>
<dbReference type="GO" id="GO:0006469">
    <property type="term" value="P:negative regulation of protein kinase activity"/>
    <property type="evidence" value="ECO:0000250"/>
    <property type="project" value="UniProtKB"/>
</dbReference>
<dbReference type="GO" id="GO:0050860">
    <property type="term" value="P:negative regulation of T cell receptor signaling pathway"/>
    <property type="evidence" value="ECO:0000314"/>
    <property type="project" value="UniProtKB"/>
</dbReference>
<dbReference type="GO" id="GO:0002693">
    <property type="term" value="P:positive regulation of cellular extravasation"/>
    <property type="evidence" value="ECO:0007669"/>
    <property type="project" value="Ensembl"/>
</dbReference>
<dbReference type="GO" id="GO:0051894">
    <property type="term" value="P:positive regulation of focal adhesion assembly"/>
    <property type="evidence" value="ECO:0000315"/>
    <property type="project" value="UniProtKB"/>
</dbReference>
<dbReference type="GO" id="GO:0043547">
    <property type="term" value="P:positive regulation of GTPase activity"/>
    <property type="evidence" value="ECO:0000250"/>
    <property type="project" value="UniProtKB"/>
</dbReference>
<dbReference type="GO" id="GO:0051281">
    <property type="term" value="P:positive regulation of release of sequestered calcium ion into cytosol"/>
    <property type="evidence" value="ECO:0000250"/>
    <property type="project" value="UniProtKB"/>
</dbReference>
<dbReference type="GO" id="GO:0050870">
    <property type="term" value="P:positive regulation of T cell activation"/>
    <property type="evidence" value="ECO:0000250"/>
    <property type="project" value="UniProtKB"/>
</dbReference>
<dbReference type="GO" id="GO:0043113">
    <property type="term" value="P:receptor clustering"/>
    <property type="evidence" value="ECO:0000250"/>
    <property type="project" value="UniProtKB"/>
</dbReference>
<dbReference type="GO" id="GO:2000298">
    <property type="term" value="P:regulation of Rho-dependent protein serine/threonine kinase activity"/>
    <property type="evidence" value="ECO:0000314"/>
    <property type="project" value="UniProtKB"/>
</dbReference>
<dbReference type="GO" id="GO:0046549">
    <property type="term" value="P:retinal cone cell development"/>
    <property type="evidence" value="ECO:0000315"/>
    <property type="project" value="UniProtKB"/>
</dbReference>
<dbReference type="GO" id="GO:0050852">
    <property type="term" value="P:T cell receptor signaling pathway"/>
    <property type="evidence" value="ECO:0000250"/>
    <property type="project" value="UniProtKB"/>
</dbReference>
<dbReference type="FunFam" id="2.60.40.10:FF:001319">
    <property type="entry name" value="Thy-1 membrane glycoprotein"/>
    <property type="match status" value="1"/>
</dbReference>
<dbReference type="Gene3D" id="2.60.40.10">
    <property type="entry name" value="Immunoglobulins"/>
    <property type="match status" value="1"/>
</dbReference>
<dbReference type="InterPro" id="IPR007110">
    <property type="entry name" value="Ig-like_dom"/>
</dbReference>
<dbReference type="InterPro" id="IPR036179">
    <property type="entry name" value="Ig-like_dom_sf"/>
</dbReference>
<dbReference type="InterPro" id="IPR013783">
    <property type="entry name" value="Ig-like_fold"/>
</dbReference>
<dbReference type="InterPro" id="IPR013106">
    <property type="entry name" value="Ig_V-set"/>
</dbReference>
<dbReference type="InterPro" id="IPR013151">
    <property type="entry name" value="Immunoglobulin_dom"/>
</dbReference>
<dbReference type="InterPro" id="IPR033292">
    <property type="entry name" value="THY1"/>
</dbReference>
<dbReference type="PANTHER" id="PTHR19226">
    <property type="entry name" value="THY-1 MEMBRANE GLYCOPROTEIN"/>
    <property type="match status" value="1"/>
</dbReference>
<dbReference type="PANTHER" id="PTHR19226:SF2">
    <property type="entry name" value="THY-1 MEMBRANE GLYCOPROTEIN"/>
    <property type="match status" value="1"/>
</dbReference>
<dbReference type="Pfam" id="PF00047">
    <property type="entry name" value="ig"/>
    <property type="match status" value="1"/>
</dbReference>
<dbReference type="SMART" id="SM00406">
    <property type="entry name" value="IGv"/>
    <property type="match status" value="1"/>
</dbReference>
<dbReference type="SUPFAM" id="SSF48726">
    <property type="entry name" value="Immunoglobulin"/>
    <property type="match status" value="1"/>
</dbReference>
<dbReference type="PROSITE" id="PS50835">
    <property type="entry name" value="IG_LIKE"/>
    <property type="match status" value="1"/>
</dbReference>
<protein>
    <recommendedName>
        <fullName>Thy-1 membrane glycoprotein</fullName>
    </recommendedName>
    <alternativeName>
        <fullName>Thy-1 antigen</fullName>
    </alternativeName>
    <cdAntigenName>CD90</cdAntigenName>
</protein>
<accession>P01831</accession>
<proteinExistence type="evidence at protein level"/>
<evidence type="ECO:0000255" key="1">
    <source>
        <dbReference type="PROSITE-ProRule" id="PRU00114"/>
    </source>
</evidence>
<evidence type="ECO:0000269" key="2">
    <source>
    </source>
</evidence>
<evidence type="ECO:0000305" key="3">
    <source>
    </source>
</evidence>
<evidence type="ECO:0000305" key="4">
    <source>
    </source>
</evidence>
<evidence type="ECO:0000305" key="5">
    <source>
    </source>
</evidence>
<evidence type="ECO:0000305" key="6">
    <source>
    </source>
</evidence>
<keyword id="KW-1003">Cell membrane</keyword>
<keyword id="KW-0903">Direct protein sequencing</keyword>
<keyword id="KW-1015">Disulfide bond</keyword>
<keyword id="KW-0325">Glycoprotein</keyword>
<keyword id="KW-0336">GPI-anchor</keyword>
<keyword id="KW-0393">Immunoglobulin domain</keyword>
<keyword id="KW-0449">Lipoprotein</keyword>
<keyword id="KW-0472">Membrane</keyword>
<keyword id="KW-0873">Pyrrolidone carboxylic acid</keyword>
<keyword id="KW-1185">Reference proteome</keyword>
<keyword id="KW-0732">Signal</keyword>